<accession>Q73HA8</accession>
<proteinExistence type="inferred from homology"/>
<protein>
    <recommendedName>
        <fullName evidence="1">Small ribosomal subunit protein uS11</fullName>
    </recommendedName>
    <alternativeName>
        <fullName evidence="2">30S ribosomal protein S11</fullName>
    </alternativeName>
</protein>
<keyword id="KW-0687">Ribonucleoprotein</keyword>
<keyword id="KW-0689">Ribosomal protein</keyword>
<keyword id="KW-0694">RNA-binding</keyword>
<keyword id="KW-0699">rRNA-binding</keyword>
<dbReference type="EMBL" id="AE017196">
    <property type="protein sequence ID" value="AAS14357.1"/>
    <property type="molecule type" value="Genomic_DNA"/>
</dbReference>
<dbReference type="RefSeq" id="WP_010962744.1">
    <property type="nucleotide sequence ID" value="NZ_OX384529.1"/>
</dbReference>
<dbReference type="SMR" id="Q73HA8"/>
<dbReference type="EnsemblBacteria" id="AAS14357">
    <property type="protein sequence ID" value="AAS14357"/>
    <property type="gene ID" value="WD_0659"/>
</dbReference>
<dbReference type="GeneID" id="70036142"/>
<dbReference type="KEGG" id="wol:WD_0659"/>
<dbReference type="eggNOG" id="COG0100">
    <property type="taxonomic scope" value="Bacteria"/>
</dbReference>
<dbReference type="Proteomes" id="UP000008215">
    <property type="component" value="Chromosome"/>
</dbReference>
<dbReference type="GO" id="GO:1990904">
    <property type="term" value="C:ribonucleoprotein complex"/>
    <property type="evidence" value="ECO:0007669"/>
    <property type="project" value="UniProtKB-KW"/>
</dbReference>
<dbReference type="GO" id="GO:0005840">
    <property type="term" value="C:ribosome"/>
    <property type="evidence" value="ECO:0007669"/>
    <property type="project" value="UniProtKB-KW"/>
</dbReference>
<dbReference type="GO" id="GO:0019843">
    <property type="term" value="F:rRNA binding"/>
    <property type="evidence" value="ECO:0007669"/>
    <property type="project" value="UniProtKB-UniRule"/>
</dbReference>
<dbReference type="GO" id="GO:0003735">
    <property type="term" value="F:structural constituent of ribosome"/>
    <property type="evidence" value="ECO:0007669"/>
    <property type="project" value="InterPro"/>
</dbReference>
<dbReference type="GO" id="GO:0006412">
    <property type="term" value="P:translation"/>
    <property type="evidence" value="ECO:0007669"/>
    <property type="project" value="UniProtKB-UniRule"/>
</dbReference>
<dbReference type="Gene3D" id="3.30.420.80">
    <property type="entry name" value="Ribosomal protein S11"/>
    <property type="match status" value="1"/>
</dbReference>
<dbReference type="HAMAP" id="MF_01310">
    <property type="entry name" value="Ribosomal_uS11"/>
    <property type="match status" value="1"/>
</dbReference>
<dbReference type="InterPro" id="IPR001971">
    <property type="entry name" value="Ribosomal_uS11"/>
</dbReference>
<dbReference type="InterPro" id="IPR019981">
    <property type="entry name" value="Ribosomal_uS11_bac-type"/>
</dbReference>
<dbReference type="InterPro" id="IPR036967">
    <property type="entry name" value="Ribosomal_uS11_sf"/>
</dbReference>
<dbReference type="NCBIfam" id="NF003698">
    <property type="entry name" value="PRK05309.1"/>
    <property type="match status" value="1"/>
</dbReference>
<dbReference type="NCBIfam" id="TIGR03632">
    <property type="entry name" value="uS11_bact"/>
    <property type="match status" value="1"/>
</dbReference>
<dbReference type="PANTHER" id="PTHR11759">
    <property type="entry name" value="40S RIBOSOMAL PROTEIN S14/30S RIBOSOMAL PROTEIN S11"/>
    <property type="match status" value="1"/>
</dbReference>
<dbReference type="Pfam" id="PF00411">
    <property type="entry name" value="Ribosomal_S11"/>
    <property type="match status" value="1"/>
</dbReference>
<dbReference type="PIRSF" id="PIRSF002131">
    <property type="entry name" value="Ribosomal_S11"/>
    <property type="match status" value="1"/>
</dbReference>
<dbReference type="SUPFAM" id="SSF53137">
    <property type="entry name" value="Translational machinery components"/>
    <property type="match status" value="1"/>
</dbReference>
<evidence type="ECO:0000255" key="1">
    <source>
        <dbReference type="HAMAP-Rule" id="MF_01310"/>
    </source>
</evidence>
<evidence type="ECO:0000305" key="2"/>
<organism>
    <name type="scientific">Wolbachia pipientis wMel</name>
    <dbReference type="NCBI Taxonomy" id="163164"/>
    <lineage>
        <taxon>Bacteria</taxon>
        <taxon>Pseudomonadati</taxon>
        <taxon>Pseudomonadota</taxon>
        <taxon>Alphaproteobacteria</taxon>
        <taxon>Rickettsiales</taxon>
        <taxon>Anaplasmataceae</taxon>
        <taxon>Wolbachieae</taxon>
        <taxon>Wolbachia</taxon>
    </lineage>
</organism>
<feature type="chain" id="PRO_0000294885" description="Small ribosomal subunit protein uS11">
    <location>
        <begin position="1"/>
        <end position="128"/>
    </location>
</feature>
<reference key="1">
    <citation type="journal article" date="2004" name="PLoS Biol.">
        <title>Phylogenomics of the reproductive parasite Wolbachia pipientis wMel: a streamlined genome overrun by mobile genetic elements.</title>
        <authorList>
            <person name="Wu M."/>
            <person name="Sun L.V."/>
            <person name="Vamathevan J.J."/>
            <person name="Riegler M."/>
            <person name="DeBoy R.T."/>
            <person name="Brownlie J.C."/>
            <person name="McGraw E.A."/>
            <person name="Martin W."/>
            <person name="Esser C."/>
            <person name="Ahmadinejad N."/>
            <person name="Wiegand C."/>
            <person name="Madupu R."/>
            <person name="Beanan M.J."/>
            <person name="Brinkac L.M."/>
            <person name="Daugherty S.C."/>
            <person name="Durkin A.S."/>
            <person name="Kolonay J.F."/>
            <person name="Nelson W.C."/>
            <person name="Mohamoud Y."/>
            <person name="Lee P."/>
            <person name="Berry K.J."/>
            <person name="Young M.B."/>
            <person name="Utterback T.R."/>
            <person name="Weidman J.F."/>
            <person name="Nierman W.C."/>
            <person name="Paulsen I.T."/>
            <person name="Nelson K.E."/>
            <person name="Tettelin H."/>
            <person name="O'Neill S.L."/>
            <person name="Eisen J.A."/>
        </authorList>
    </citation>
    <scope>NUCLEOTIDE SEQUENCE [LARGE SCALE GENOMIC DNA]</scope>
</reference>
<gene>
    <name evidence="1" type="primary">rpsK</name>
    <name type="ordered locus">WD_0659</name>
</gene>
<sequence>MKKVKTVSKSKKEFITGVVHIRATFNNTFVNVTDVHGNTLCQTSVGACGFSGSRKSTPYAAGKAAESAAKNAMERFGMKVVSVIIRGPGFGTEAAVKAFQSCGLTVTSIADKTAIPHNGCRLRKKRRV</sequence>
<name>RS11_WOLPM</name>
<comment type="function">
    <text evidence="1">Located on the platform of the 30S subunit, it bridges several disparate RNA helices of the 16S rRNA. Forms part of the Shine-Dalgarno cleft in the 70S ribosome.</text>
</comment>
<comment type="subunit">
    <text evidence="1">Part of the 30S ribosomal subunit. Interacts with proteins S7 and S18. Binds to IF-3.</text>
</comment>
<comment type="similarity">
    <text evidence="1">Belongs to the universal ribosomal protein uS11 family.</text>
</comment>